<name>ATPD_CHLAD</name>
<sequence>MATTIDARALAAPLVEALLSTAAEQIRAAAPRIAGLPASDAAAVLPADLLPQVRNFLLTMVKEGLSGELNAVAEALQTYLETGRRVIDASVTSAIELSSEQQERITSELRRRYGDVHVTYHVDPTLIGGLIIRVGDQVLDNSLRARLSAVQRALQAS</sequence>
<accession>B8G6G9</accession>
<dbReference type="EMBL" id="CP001337">
    <property type="protein sequence ID" value="ACL23906.1"/>
    <property type="molecule type" value="Genomic_DNA"/>
</dbReference>
<dbReference type="RefSeq" id="WP_012616272.1">
    <property type="nucleotide sequence ID" value="NC_011831.1"/>
</dbReference>
<dbReference type="SMR" id="B8G6G9"/>
<dbReference type="STRING" id="326427.Cagg_0988"/>
<dbReference type="KEGG" id="cag:Cagg_0988"/>
<dbReference type="eggNOG" id="COG0712">
    <property type="taxonomic scope" value="Bacteria"/>
</dbReference>
<dbReference type="HOGENOM" id="CLU_085114_3_0_0"/>
<dbReference type="OrthoDB" id="9802471at2"/>
<dbReference type="Proteomes" id="UP000002508">
    <property type="component" value="Chromosome"/>
</dbReference>
<dbReference type="GO" id="GO:0005886">
    <property type="term" value="C:plasma membrane"/>
    <property type="evidence" value="ECO:0007669"/>
    <property type="project" value="UniProtKB-SubCell"/>
</dbReference>
<dbReference type="GO" id="GO:0045259">
    <property type="term" value="C:proton-transporting ATP synthase complex"/>
    <property type="evidence" value="ECO:0007669"/>
    <property type="project" value="UniProtKB-KW"/>
</dbReference>
<dbReference type="GO" id="GO:0046933">
    <property type="term" value="F:proton-transporting ATP synthase activity, rotational mechanism"/>
    <property type="evidence" value="ECO:0007669"/>
    <property type="project" value="UniProtKB-UniRule"/>
</dbReference>
<dbReference type="HAMAP" id="MF_01416">
    <property type="entry name" value="ATP_synth_delta_bact"/>
    <property type="match status" value="1"/>
</dbReference>
<dbReference type="InterPro" id="IPR020781">
    <property type="entry name" value="ATPase_OSCP/d_CS"/>
</dbReference>
<dbReference type="InterPro" id="IPR000711">
    <property type="entry name" value="ATPase_OSCP/dsu"/>
</dbReference>
<dbReference type="NCBIfam" id="TIGR01145">
    <property type="entry name" value="ATP_synt_delta"/>
    <property type="match status" value="1"/>
</dbReference>
<dbReference type="PANTHER" id="PTHR11910">
    <property type="entry name" value="ATP SYNTHASE DELTA CHAIN"/>
    <property type="match status" value="1"/>
</dbReference>
<dbReference type="Pfam" id="PF00213">
    <property type="entry name" value="OSCP"/>
    <property type="match status" value="1"/>
</dbReference>
<dbReference type="SUPFAM" id="SSF160527">
    <property type="entry name" value="V-type ATPase subunit E-like"/>
    <property type="match status" value="1"/>
</dbReference>
<dbReference type="PROSITE" id="PS00389">
    <property type="entry name" value="ATPASE_DELTA"/>
    <property type="match status" value="1"/>
</dbReference>
<comment type="function">
    <text evidence="1">F(1)F(0) ATP synthase produces ATP from ADP in the presence of a proton or sodium gradient. F-type ATPases consist of two structural domains, F(1) containing the extramembraneous catalytic core and F(0) containing the membrane proton channel, linked together by a central stalk and a peripheral stalk. During catalysis, ATP synthesis in the catalytic domain of F(1) is coupled via a rotary mechanism of the central stalk subunits to proton translocation.</text>
</comment>
<comment type="function">
    <text evidence="1">This protein is part of the stalk that links CF(0) to CF(1). It either transmits conformational changes from CF(0) to CF(1) or is implicated in proton conduction.</text>
</comment>
<comment type="subunit">
    <text evidence="1">F-type ATPases have 2 components, F(1) - the catalytic core - and F(0) - the membrane proton channel. F(1) has five subunits: alpha(3), beta(3), gamma(1), delta(1), epsilon(1). F(0) has three main subunits: a(1), b(2) and c(10-14). The alpha and beta chains form an alternating ring which encloses part of the gamma chain. F(1) is attached to F(0) by a central stalk formed by the gamma and epsilon chains, while a peripheral stalk is formed by the delta and b chains.</text>
</comment>
<comment type="subcellular location">
    <subcellularLocation>
        <location evidence="1">Cell membrane</location>
        <topology evidence="1">Peripheral membrane protein</topology>
    </subcellularLocation>
</comment>
<comment type="similarity">
    <text evidence="1">Belongs to the ATPase delta chain family.</text>
</comment>
<feature type="chain" id="PRO_0000382081" description="ATP synthase subunit delta">
    <location>
        <begin position="1"/>
        <end position="157"/>
    </location>
</feature>
<evidence type="ECO:0000255" key="1">
    <source>
        <dbReference type="HAMAP-Rule" id="MF_01416"/>
    </source>
</evidence>
<organism>
    <name type="scientific">Chloroflexus aggregans (strain MD-66 / DSM 9485)</name>
    <dbReference type="NCBI Taxonomy" id="326427"/>
    <lineage>
        <taxon>Bacteria</taxon>
        <taxon>Bacillati</taxon>
        <taxon>Chloroflexota</taxon>
        <taxon>Chloroflexia</taxon>
        <taxon>Chloroflexales</taxon>
        <taxon>Chloroflexineae</taxon>
        <taxon>Chloroflexaceae</taxon>
        <taxon>Chloroflexus</taxon>
    </lineage>
</organism>
<keyword id="KW-0066">ATP synthesis</keyword>
<keyword id="KW-1003">Cell membrane</keyword>
<keyword id="KW-0139">CF(1)</keyword>
<keyword id="KW-0375">Hydrogen ion transport</keyword>
<keyword id="KW-0406">Ion transport</keyword>
<keyword id="KW-0472">Membrane</keyword>
<keyword id="KW-0813">Transport</keyword>
<protein>
    <recommendedName>
        <fullName evidence="1">ATP synthase subunit delta</fullName>
    </recommendedName>
    <alternativeName>
        <fullName evidence="1">ATP synthase F(1) sector subunit delta</fullName>
    </alternativeName>
    <alternativeName>
        <fullName evidence="1">F-type ATPase subunit delta</fullName>
        <shortName evidence="1">F-ATPase subunit delta</shortName>
    </alternativeName>
</protein>
<proteinExistence type="inferred from homology"/>
<reference key="1">
    <citation type="submission" date="2008-12" db="EMBL/GenBank/DDBJ databases">
        <title>Complete sequence of Chloroflexus aggregans DSM 9485.</title>
        <authorList>
            <consortium name="US DOE Joint Genome Institute"/>
            <person name="Lucas S."/>
            <person name="Copeland A."/>
            <person name="Lapidus A."/>
            <person name="Glavina del Rio T."/>
            <person name="Dalin E."/>
            <person name="Tice H."/>
            <person name="Pitluck S."/>
            <person name="Foster B."/>
            <person name="Larimer F."/>
            <person name="Land M."/>
            <person name="Hauser L."/>
            <person name="Kyrpides N."/>
            <person name="Mikhailova N."/>
            <person name="Bryant D.A."/>
            <person name="Richardson P."/>
        </authorList>
    </citation>
    <scope>NUCLEOTIDE SEQUENCE [LARGE SCALE GENOMIC DNA]</scope>
    <source>
        <strain>MD-66 / DSM 9485</strain>
    </source>
</reference>
<gene>
    <name evidence="1" type="primary">atpH</name>
    <name type="ordered locus">Cagg_0988</name>
</gene>